<feature type="chain" id="PRO_1000203343" description="Phosphoglycerate kinase">
    <location>
        <begin position="1"/>
        <end position="415"/>
    </location>
</feature>
<feature type="binding site" evidence="1">
    <location>
        <begin position="24"/>
        <end position="26"/>
    </location>
    <ligand>
        <name>substrate</name>
    </ligand>
</feature>
<feature type="binding site" evidence="1">
    <location>
        <position position="39"/>
    </location>
    <ligand>
        <name>substrate</name>
    </ligand>
</feature>
<feature type="binding site" evidence="1">
    <location>
        <begin position="62"/>
        <end position="65"/>
    </location>
    <ligand>
        <name>substrate</name>
    </ligand>
</feature>
<feature type="binding site" evidence="1">
    <location>
        <position position="121"/>
    </location>
    <ligand>
        <name>substrate</name>
    </ligand>
</feature>
<feature type="binding site" evidence="1">
    <location>
        <position position="161"/>
    </location>
    <ligand>
        <name>substrate</name>
    </ligand>
</feature>
<feature type="binding site" evidence="1">
    <location>
        <position position="211"/>
    </location>
    <ligand>
        <name>ATP</name>
        <dbReference type="ChEBI" id="CHEBI:30616"/>
    </ligand>
</feature>
<feature type="binding site" evidence="1">
    <location>
        <position position="307"/>
    </location>
    <ligand>
        <name>ATP</name>
        <dbReference type="ChEBI" id="CHEBI:30616"/>
    </ligand>
</feature>
<feature type="binding site" evidence="1">
    <location>
        <position position="338"/>
    </location>
    <ligand>
        <name>ATP</name>
        <dbReference type="ChEBI" id="CHEBI:30616"/>
    </ligand>
</feature>
<feature type="binding site" evidence="1">
    <location>
        <begin position="367"/>
        <end position="370"/>
    </location>
    <ligand>
        <name>ATP</name>
        <dbReference type="ChEBI" id="CHEBI:30616"/>
    </ligand>
</feature>
<dbReference type="EC" id="2.7.2.3" evidence="1"/>
<dbReference type="EMBL" id="CP001628">
    <property type="protein sequence ID" value="ACS30642.1"/>
    <property type="molecule type" value="Genomic_DNA"/>
</dbReference>
<dbReference type="RefSeq" id="WP_010078717.1">
    <property type="nucleotide sequence ID" value="NC_012803.1"/>
</dbReference>
<dbReference type="SMR" id="C5CBP5"/>
<dbReference type="STRING" id="465515.Mlut_11360"/>
<dbReference type="EnsemblBacteria" id="ACS30642">
    <property type="protein sequence ID" value="ACS30642"/>
    <property type="gene ID" value="Mlut_11360"/>
</dbReference>
<dbReference type="GeneID" id="93345293"/>
<dbReference type="KEGG" id="mlu:Mlut_11360"/>
<dbReference type="PATRIC" id="fig|465515.4.peg.1078"/>
<dbReference type="eggNOG" id="COG0126">
    <property type="taxonomic scope" value="Bacteria"/>
</dbReference>
<dbReference type="HOGENOM" id="CLU_025427_0_2_11"/>
<dbReference type="UniPathway" id="UPA00109">
    <property type="reaction ID" value="UER00185"/>
</dbReference>
<dbReference type="Proteomes" id="UP000000738">
    <property type="component" value="Chromosome"/>
</dbReference>
<dbReference type="GO" id="GO:0005829">
    <property type="term" value="C:cytosol"/>
    <property type="evidence" value="ECO:0007669"/>
    <property type="project" value="TreeGrafter"/>
</dbReference>
<dbReference type="GO" id="GO:0043531">
    <property type="term" value="F:ADP binding"/>
    <property type="evidence" value="ECO:0007669"/>
    <property type="project" value="TreeGrafter"/>
</dbReference>
<dbReference type="GO" id="GO:0005524">
    <property type="term" value="F:ATP binding"/>
    <property type="evidence" value="ECO:0007669"/>
    <property type="project" value="UniProtKB-KW"/>
</dbReference>
<dbReference type="GO" id="GO:0004618">
    <property type="term" value="F:phosphoglycerate kinase activity"/>
    <property type="evidence" value="ECO:0007669"/>
    <property type="project" value="UniProtKB-UniRule"/>
</dbReference>
<dbReference type="GO" id="GO:0006094">
    <property type="term" value="P:gluconeogenesis"/>
    <property type="evidence" value="ECO:0007669"/>
    <property type="project" value="TreeGrafter"/>
</dbReference>
<dbReference type="GO" id="GO:0006096">
    <property type="term" value="P:glycolytic process"/>
    <property type="evidence" value="ECO:0007669"/>
    <property type="project" value="UniProtKB-UniRule"/>
</dbReference>
<dbReference type="FunFam" id="3.40.50.1260:FF:000006">
    <property type="entry name" value="Phosphoglycerate kinase"/>
    <property type="match status" value="1"/>
</dbReference>
<dbReference type="FunFam" id="3.40.50.1260:FF:000031">
    <property type="entry name" value="Phosphoglycerate kinase 1"/>
    <property type="match status" value="1"/>
</dbReference>
<dbReference type="Gene3D" id="3.40.50.1260">
    <property type="entry name" value="Phosphoglycerate kinase, N-terminal domain"/>
    <property type="match status" value="2"/>
</dbReference>
<dbReference type="HAMAP" id="MF_00145">
    <property type="entry name" value="Phosphoglyc_kinase"/>
    <property type="match status" value="1"/>
</dbReference>
<dbReference type="InterPro" id="IPR001576">
    <property type="entry name" value="Phosphoglycerate_kinase"/>
</dbReference>
<dbReference type="InterPro" id="IPR015911">
    <property type="entry name" value="Phosphoglycerate_kinase_CS"/>
</dbReference>
<dbReference type="InterPro" id="IPR015824">
    <property type="entry name" value="Phosphoglycerate_kinase_N"/>
</dbReference>
<dbReference type="InterPro" id="IPR036043">
    <property type="entry name" value="Phosphoglycerate_kinase_sf"/>
</dbReference>
<dbReference type="PANTHER" id="PTHR11406">
    <property type="entry name" value="PHOSPHOGLYCERATE KINASE"/>
    <property type="match status" value="1"/>
</dbReference>
<dbReference type="PANTHER" id="PTHR11406:SF23">
    <property type="entry name" value="PHOSPHOGLYCERATE KINASE 1, CHLOROPLASTIC-RELATED"/>
    <property type="match status" value="1"/>
</dbReference>
<dbReference type="Pfam" id="PF00162">
    <property type="entry name" value="PGK"/>
    <property type="match status" value="1"/>
</dbReference>
<dbReference type="PIRSF" id="PIRSF000724">
    <property type="entry name" value="Pgk"/>
    <property type="match status" value="1"/>
</dbReference>
<dbReference type="PRINTS" id="PR00477">
    <property type="entry name" value="PHGLYCKINASE"/>
</dbReference>
<dbReference type="SUPFAM" id="SSF53748">
    <property type="entry name" value="Phosphoglycerate kinase"/>
    <property type="match status" value="1"/>
</dbReference>
<dbReference type="PROSITE" id="PS00111">
    <property type="entry name" value="PGLYCERATE_KINASE"/>
    <property type="match status" value="1"/>
</dbReference>
<evidence type="ECO:0000255" key="1">
    <source>
        <dbReference type="HAMAP-Rule" id="MF_00145"/>
    </source>
</evidence>
<comment type="catalytic activity">
    <reaction evidence="1">
        <text>(2R)-3-phosphoglycerate + ATP = (2R)-3-phospho-glyceroyl phosphate + ADP</text>
        <dbReference type="Rhea" id="RHEA:14801"/>
        <dbReference type="ChEBI" id="CHEBI:30616"/>
        <dbReference type="ChEBI" id="CHEBI:57604"/>
        <dbReference type="ChEBI" id="CHEBI:58272"/>
        <dbReference type="ChEBI" id="CHEBI:456216"/>
        <dbReference type="EC" id="2.7.2.3"/>
    </reaction>
</comment>
<comment type="pathway">
    <text evidence="1">Carbohydrate degradation; glycolysis; pyruvate from D-glyceraldehyde 3-phosphate: step 2/5.</text>
</comment>
<comment type="subunit">
    <text evidence="1">Monomer.</text>
</comment>
<comment type="subcellular location">
    <subcellularLocation>
        <location evidence="1">Cytoplasm</location>
    </subcellularLocation>
</comment>
<comment type="similarity">
    <text evidence="1">Belongs to the phosphoglycerate kinase family.</text>
</comment>
<keyword id="KW-0067">ATP-binding</keyword>
<keyword id="KW-0963">Cytoplasm</keyword>
<keyword id="KW-0324">Glycolysis</keyword>
<keyword id="KW-0418">Kinase</keyword>
<keyword id="KW-0547">Nucleotide-binding</keyword>
<keyword id="KW-1185">Reference proteome</keyword>
<keyword id="KW-0808">Transferase</keyword>
<accession>C5CBP5</accession>
<proteinExistence type="inferred from homology"/>
<name>PGK_MICLC</name>
<protein>
    <recommendedName>
        <fullName evidence="1">Phosphoglycerate kinase</fullName>
        <ecNumber evidence="1">2.7.2.3</ecNumber>
    </recommendedName>
</protein>
<gene>
    <name evidence="1" type="primary">pgk</name>
    <name type="ordered locus">Mlut_11360</name>
</gene>
<reference key="1">
    <citation type="journal article" date="2010" name="J. Bacteriol.">
        <title>Genome sequence of the Fleming strain of Micrococcus luteus, a simple free-living actinobacterium.</title>
        <authorList>
            <person name="Young M."/>
            <person name="Artsatbanov V."/>
            <person name="Beller H.R."/>
            <person name="Chandra G."/>
            <person name="Chater K.F."/>
            <person name="Dover L.G."/>
            <person name="Goh E.B."/>
            <person name="Kahan T."/>
            <person name="Kaprelyants A.S."/>
            <person name="Kyrpides N."/>
            <person name="Lapidus A."/>
            <person name="Lowry S.R."/>
            <person name="Lykidis A."/>
            <person name="Mahillon J."/>
            <person name="Markowitz V."/>
            <person name="Mavromatis K."/>
            <person name="Mukamolova G.V."/>
            <person name="Oren A."/>
            <person name="Rokem J.S."/>
            <person name="Smith M.C."/>
            <person name="Young D.I."/>
            <person name="Greenblatt C.L."/>
        </authorList>
    </citation>
    <scope>NUCLEOTIDE SEQUENCE [LARGE SCALE GENOMIC DNA]</scope>
    <source>
        <strain>ATCC 4698 / DSM 20030 / JCM 1464 / CCM 169 / CCUG 5858 / IAM 1056 / NBRC 3333 / NCIMB 9278 / NCTC 2665 / VKM Ac-2230</strain>
    </source>
</reference>
<organism>
    <name type="scientific">Micrococcus luteus (strain ATCC 4698 / DSM 20030 / JCM 1464 / CCM 169 / CCUG 5858 / IAM 1056 / NBRC 3333 / NCIMB 9278 / NCTC 2665 / VKM Ac-2230)</name>
    <name type="common">Micrococcus lysodeikticus</name>
    <dbReference type="NCBI Taxonomy" id="465515"/>
    <lineage>
        <taxon>Bacteria</taxon>
        <taxon>Bacillati</taxon>
        <taxon>Actinomycetota</taxon>
        <taxon>Actinomycetes</taxon>
        <taxon>Micrococcales</taxon>
        <taxon>Micrococcaceae</taxon>
        <taxon>Micrococcus</taxon>
    </lineage>
</organism>
<sequence length="415" mass="42606">MPASTLNDLLEAGVTGRTVLIRSDLNVPLDGDTVTDDGRIRASLPAIRDLAEAGARVIVMAHLGRPKGEPDPAYSLRPVAARMAELLGADVALAADVTGDDARAQAAALQDGQVLLLENVRFDARETSKDDAERAALAGEMAALAGEDGAYVGDAFGAVHRKHASVFDVAAQLPAYQGPLVAAELEVLTRLTESPEQPYVVVLGGSKVSDKLAVIDNLLDKADTLLIGGGMLFTFLKAQGHEVGASLLEEDQLDTVRAYLRRSEAGAARIVLPTDIVMASGFAADAEHEVLAADALTSGAHGASAMGLDIGPETARAFAEQIRGAQTVFWNGPMGVFEFPAFAEGTRAVARALTEASAAGGLSVVGGGDSAAAVRTLGFADDAFGHISTGGGASLEYLEGKELPGVTALAGEGRA</sequence>